<reference key="1">
    <citation type="journal article" date="2009" name="PLoS Genet.">
        <title>Organised genome dynamics in the Escherichia coli species results in highly diverse adaptive paths.</title>
        <authorList>
            <person name="Touchon M."/>
            <person name="Hoede C."/>
            <person name="Tenaillon O."/>
            <person name="Barbe V."/>
            <person name="Baeriswyl S."/>
            <person name="Bidet P."/>
            <person name="Bingen E."/>
            <person name="Bonacorsi S."/>
            <person name="Bouchier C."/>
            <person name="Bouvet O."/>
            <person name="Calteau A."/>
            <person name="Chiapello H."/>
            <person name="Clermont O."/>
            <person name="Cruveiller S."/>
            <person name="Danchin A."/>
            <person name="Diard M."/>
            <person name="Dossat C."/>
            <person name="Karoui M.E."/>
            <person name="Frapy E."/>
            <person name="Garry L."/>
            <person name="Ghigo J.M."/>
            <person name="Gilles A.M."/>
            <person name="Johnson J."/>
            <person name="Le Bouguenec C."/>
            <person name="Lescat M."/>
            <person name="Mangenot S."/>
            <person name="Martinez-Jehanne V."/>
            <person name="Matic I."/>
            <person name="Nassif X."/>
            <person name="Oztas S."/>
            <person name="Petit M.A."/>
            <person name="Pichon C."/>
            <person name="Rouy Z."/>
            <person name="Ruf C.S."/>
            <person name="Schneider D."/>
            <person name="Tourret J."/>
            <person name="Vacherie B."/>
            <person name="Vallenet D."/>
            <person name="Medigue C."/>
            <person name="Rocha E.P.C."/>
            <person name="Denamur E."/>
        </authorList>
    </citation>
    <scope>NUCLEOTIDE SEQUENCE [LARGE SCALE GENOMIC DNA]</scope>
    <source>
        <strain>IAI39 / ExPEC</strain>
    </source>
</reference>
<organism>
    <name type="scientific">Escherichia coli O7:K1 (strain IAI39 / ExPEC)</name>
    <dbReference type="NCBI Taxonomy" id="585057"/>
    <lineage>
        <taxon>Bacteria</taxon>
        <taxon>Pseudomonadati</taxon>
        <taxon>Pseudomonadota</taxon>
        <taxon>Gammaproteobacteria</taxon>
        <taxon>Enterobacterales</taxon>
        <taxon>Enterobacteriaceae</taxon>
        <taxon>Escherichia</taxon>
    </lineage>
</organism>
<name>ULAG_ECO7I</name>
<evidence type="ECO:0000255" key="1">
    <source>
        <dbReference type="HAMAP-Rule" id="MF_01266"/>
    </source>
</evidence>
<comment type="function">
    <text evidence="1">Probably catalyzes the hydrolysis of L-ascorbate-6-P into 3-keto-L-gulonate-6-P. Is essential for L-ascorbate utilization under anaerobic conditions.</text>
</comment>
<comment type="catalytic activity">
    <reaction evidence="1">
        <text>L-ascorbate 6-phosphate + H2O = 3-dehydro-L-gulonate 6-phosphate</text>
        <dbReference type="Rhea" id="RHEA:28803"/>
        <dbReference type="ChEBI" id="CHEBI:15377"/>
        <dbReference type="ChEBI" id="CHEBI:58774"/>
        <dbReference type="ChEBI" id="CHEBI:61698"/>
    </reaction>
</comment>
<comment type="cofactor">
    <cofactor evidence="1">
        <name>a divalent metal cation</name>
        <dbReference type="ChEBI" id="CHEBI:60240"/>
    </cofactor>
</comment>
<comment type="pathway">
    <text evidence="1">Cofactor degradation; L-ascorbate degradation; D-xylulose 5-phosphate from L-ascorbate: step 1/4.</text>
</comment>
<comment type="subcellular location">
    <subcellularLocation>
        <location evidence="1">Cytoplasm</location>
    </subcellularLocation>
</comment>
<comment type="induction">
    <text evidence="1">Induced by L-ascorbate. Repressed by UlaR.</text>
</comment>
<comment type="similarity">
    <text evidence="1">Belongs to the UlaG family.</text>
</comment>
<sequence>MSKVKSITRESWILSTFPEWGSWLNEEIEQEQVAPGTFAMWWLGCTGIWLKSEGGTNVCVDFWCGTGKQSHGNPLMKQGHQMQRMAGVKKLQPNLRTTPFVLDPFAIRQIDAVLATHDHNDHIDVNVAAAVMQNCADDVPFIGPKTCVDLWIGWGVPKERCIVVKPGDVVKVKDIEIHALDAFDRTALITLPADQKAAGVLPDGMDDRAVNYLFKTPGGSLYHSGDSHYSNYYAKHGNEHQIDVALGSYGENPRGITDKMTSADMLRMGEALNAKVVIPFHHDIWSNFQADPQEIRVLWEMKKDRLKYGFKPFIWQVGGKFTWPLDKDNFEYHYPRGFDDCFTIEPDLPFKSFL</sequence>
<proteinExistence type="inferred from homology"/>
<protein>
    <recommendedName>
        <fullName evidence="1">Probable L-ascorbate-6-phosphate lactonase UlaG</fullName>
        <ecNumber evidence="1">3.1.1.-</ecNumber>
    </recommendedName>
    <alternativeName>
        <fullName evidence="1">L-ascorbate utilization protein G</fullName>
    </alternativeName>
</protein>
<feature type="chain" id="PRO_1000140093" description="Probable L-ascorbate-6-phosphate lactonase UlaG">
    <location>
        <begin position="1"/>
        <end position="354"/>
    </location>
</feature>
<gene>
    <name evidence="1" type="primary">ulaG</name>
    <name type="ordered locus">ECIAI39_4657</name>
</gene>
<dbReference type="EC" id="3.1.1.-" evidence="1"/>
<dbReference type="EMBL" id="CU928164">
    <property type="protein sequence ID" value="CAR20755.1"/>
    <property type="molecule type" value="Genomic_DNA"/>
</dbReference>
<dbReference type="RefSeq" id="WP_001295191.1">
    <property type="nucleotide sequence ID" value="NC_011750.1"/>
</dbReference>
<dbReference type="RefSeq" id="YP_002410518.1">
    <property type="nucleotide sequence ID" value="NC_011750.1"/>
</dbReference>
<dbReference type="SMR" id="B7NTP8"/>
<dbReference type="STRING" id="585057.ECIAI39_4657"/>
<dbReference type="GeneID" id="93777632"/>
<dbReference type="KEGG" id="ect:ECIAI39_4657"/>
<dbReference type="PATRIC" id="fig|585057.6.peg.4804"/>
<dbReference type="HOGENOM" id="CLU_074775_0_0_6"/>
<dbReference type="UniPathway" id="UPA00263">
    <property type="reaction ID" value="UER00377"/>
</dbReference>
<dbReference type="Proteomes" id="UP000000749">
    <property type="component" value="Chromosome"/>
</dbReference>
<dbReference type="GO" id="GO:0005737">
    <property type="term" value="C:cytoplasm"/>
    <property type="evidence" value="ECO:0007669"/>
    <property type="project" value="UniProtKB-SubCell"/>
</dbReference>
<dbReference type="GO" id="GO:0035460">
    <property type="term" value="F:L-ascorbate 6-phosphate lactonase activity"/>
    <property type="evidence" value="ECO:0007669"/>
    <property type="project" value="InterPro"/>
</dbReference>
<dbReference type="GO" id="GO:0030145">
    <property type="term" value="F:manganese ion binding"/>
    <property type="evidence" value="ECO:0007669"/>
    <property type="project" value="InterPro"/>
</dbReference>
<dbReference type="GO" id="GO:0019854">
    <property type="term" value="P:L-ascorbic acid catabolic process"/>
    <property type="evidence" value="ECO:0007669"/>
    <property type="project" value="UniProtKB-UniRule"/>
</dbReference>
<dbReference type="CDD" id="cd16284">
    <property type="entry name" value="UlaG-like_MBL-fold"/>
    <property type="match status" value="1"/>
</dbReference>
<dbReference type="FunFam" id="3.60.15.10:FF:000004">
    <property type="entry name" value="Probable L-ascorbate-6-phosphate lactonase UlaG"/>
    <property type="match status" value="1"/>
</dbReference>
<dbReference type="Gene3D" id="3.60.15.10">
    <property type="entry name" value="Ribonuclease Z/Hydroxyacylglutathione hydrolase-like"/>
    <property type="match status" value="1"/>
</dbReference>
<dbReference type="HAMAP" id="MF_01266">
    <property type="entry name" value="UlaG"/>
    <property type="match status" value="1"/>
</dbReference>
<dbReference type="InterPro" id="IPR023951">
    <property type="entry name" value="L-ascorbate_6P_UlaG"/>
</dbReference>
<dbReference type="InterPro" id="IPR001279">
    <property type="entry name" value="Metallo-B-lactamas"/>
</dbReference>
<dbReference type="InterPro" id="IPR036866">
    <property type="entry name" value="RibonucZ/Hydroxyglut_hydro"/>
</dbReference>
<dbReference type="InterPro" id="IPR048021">
    <property type="entry name" value="UlaG-like_MBL-fold"/>
</dbReference>
<dbReference type="InterPro" id="IPR050114">
    <property type="entry name" value="UPF0173_UPF0282_UlaG_hydrolase"/>
</dbReference>
<dbReference type="NCBIfam" id="NF008688">
    <property type="entry name" value="PRK11709.1"/>
    <property type="match status" value="1"/>
</dbReference>
<dbReference type="PANTHER" id="PTHR43546:SF9">
    <property type="entry name" value="L-ASCORBATE-6-PHOSPHATE LACTONASE ULAG-RELATED"/>
    <property type="match status" value="1"/>
</dbReference>
<dbReference type="PANTHER" id="PTHR43546">
    <property type="entry name" value="UPF0173 METAL-DEPENDENT HYDROLASE MJ1163-RELATED"/>
    <property type="match status" value="1"/>
</dbReference>
<dbReference type="Pfam" id="PF12706">
    <property type="entry name" value="Lactamase_B_2"/>
    <property type="match status" value="1"/>
</dbReference>
<dbReference type="SUPFAM" id="SSF56281">
    <property type="entry name" value="Metallo-hydrolase/oxidoreductase"/>
    <property type="match status" value="1"/>
</dbReference>
<accession>B7NTP8</accession>
<keyword id="KW-0963">Cytoplasm</keyword>
<keyword id="KW-0378">Hydrolase</keyword>